<comment type="function">
    <text evidence="1">DNA-binding global transcriptional regulator which is involved in the adaptive response to starvation and acts by directly or indirectly controlling the expression of numerous genes in response to nutrient availability. During rapid exponential growth, CodY is highly active and represses genes whose products allow adaptation to nutrient depletion.</text>
</comment>
<comment type="subcellular location">
    <subcellularLocation>
        <location evidence="1">Cytoplasm</location>
    </subcellularLocation>
</comment>
<comment type="similarity">
    <text evidence="1">Belongs to the CodY family.</text>
</comment>
<keyword id="KW-0963">Cytoplasm</keyword>
<keyword id="KW-0238">DNA-binding</keyword>
<keyword id="KW-1185">Reference proteome</keyword>
<keyword id="KW-0678">Repressor</keyword>
<keyword id="KW-0804">Transcription</keyword>
<keyword id="KW-0805">Transcription regulation</keyword>
<name>CODY_CLOAB</name>
<feature type="chain" id="PRO_0000213222" description="Global transcriptional regulator CodY">
    <location>
        <begin position="1"/>
        <end position="258"/>
    </location>
</feature>
<feature type="DNA-binding region" description="H-T-H motif" evidence="1">
    <location>
        <begin position="204"/>
        <end position="223"/>
    </location>
</feature>
<feature type="region of interest" description="GAF domain" evidence="1">
    <location>
        <begin position="1"/>
        <end position="156"/>
    </location>
</feature>
<gene>
    <name evidence="1" type="primary">codY</name>
    <name type="ordered locus">CA_C1786</name>
</gene>
<organism>
    <name type="scientific">Clostridium acetobutylicum (strain ATCC 824 / DSM 792 / JCM 1419 / IAM 19013 / LMG 5710 / NBRC 13948 / NRRL B-527 / VKM B-1787 / 2291 / W)</name>
    <dbReference type="NCBI Taxonomy" id="272562"/>
    <lineage>
        <taxon>Bacteria</taxon>
        <taxon>Bacillati</taxon>
        <taxon>Bacillota</taxon>
        <taxon>Clostridia</taxon>
        <taxon>Eubacteriales</taxon>
        <taxon>Clostridiaceae</taxon>
        <taxon>Clostridium</taxon>
    </lineage>
</organism>
<accession>Q97I67</accession>
<dbReference type="EMBL" id="AE001437">
    <property type="protein sequence ID" value="AAK79751.1"/>
    <property type="molecule type" value="Genomic_DNA"/>
</dbReference>
<dbReference type="PIR" id="D97120">
    <property type="entry name" value="D97120"/>
</dbReference>
<dbReference type="RefSeq" id="NP_348411.1">
    <property type="nucleotide sequence ID" value="NC_003030.1"/>
</dbReference>
<dbReference type="RefSeq" id="WP_010965092.1">
    <property type="nucleotide sequence ID" value="NC_003030.1"/>
</dbReference>
<dbReference type="SMR" id="Q97I67"/>
<dbReference type="STRING" id="272562.CA_C1786"/>
<dbReference type="GeneID" id="44998280"/>
<dbReference type="KEGG" id="cac:CA_C1786"/>
<dbReference type="PATRIC" id="fig|272562.8.peg.1992"/>
<dbReference type="eggNOG" id="COG4465">
    <property type="taxonomic scope" value="Bacteria"/>
</dbReference>
<dbReference type="HOGENOM" id="CLU_089581_0_0_9"/>
<dbReference type="OrthoDB" id="2056at2"/>
<dbReference type="Proteomes" id="UP000000814">
    <property type="component" value="Chromosome"/>
</dbReference>
<dbReference type="GO" id="GO:0005737">
    <property type="term" value="C:cytoplasm"/>
    <property type="evidence" value="ECO:0007669"/>
    <property type="project" value="UniProtKB-SubCell"/>
</dbReference>
<dbReference type="GO" id="GO:0003677">
    <property type="term" value="F:DNA binding"/>
    <property type="evidence" value="ECO:0007669"/>
    <property type="project" value="UniProtKB-UniRule"/>
</dbReference>
<dbReference type="GO" id="GO:0003700">
    <property type="term" value="F:DNA-binding transcription factor activity"/>
    <property type="evidence" value="ECO:0007669"/>
    <property type="project" value="InterPro"/>
</dbReference>
<dbReference type="GO" id="GO:0005525">
    <property type="term" value="F:GTP binding"/>
    <property type="evidence" value="ECO:0007669"/>
    <property type="project" value="InterPro"/>
</dbReference>
<dbReference type="GO" id="GO:0045892">
    <property type="term" value="P:negative regulation of DNA-templated transcription"/>
    <property type="evidence" value="ECO:0007669"/>
    <property type="project" value="UniProtKB-UniRule"/>
</dbReference>
<dbReference type="FunFam" id="1.10.10.10:FF:000034">
    <property type="entry name" value="GTP-sensing transcriptional pleiotropic repressor CodY"/>
    <property type="match status" value="1"/>
</dbReference>
<dbReference type="Gene3D" id="3.30.450.40">
    <property type="match status" value="1"/>
</dbReference>
<dbReference type="Gene3D" id="1.10.10.10">
    <property type="entry name" value="Winged helix-like DNA-binding domain superfamily/Winged helix DNA-binding domain"/>
    <property type="match status" value="1"/>
</dbReference>
<dbReference type="HAMAP" id="MF_00621">
    <property type="entry name" value="HTH_type_CodY"/>
    <property type="match status" value="1"/>
</dbReference>
<dbReference type="InterPro" id="IPR014154">
    <property type="entry name" value="CodY"/>
</dbReference>
<dbReference type="InterPro" id="IPR029016">
    <property type="entry name" value="GAF-like_dom_sf"/>
</dbReference>
<dbReference type="InterPro" id="IPR013198">
    <property type="entry name" value="GTP_trans_reg_CodY_C"/>
</dbReference>
<dbReference type="InterPro" id="IPR010312">
    <property type="entry name" value="Transc_reg_CodY_N"/>
</dbReference>
<dbReference type="InterPro" id="IPR036388">
    <property type="entry name" value="WH-like_DNA-bd_sf"/>
</dbReference>
<dbReference type="InterPro" id="IPR036390">
    <property type="entry name" value="WH_DNA-bd_sf"/>
</dbReference>
<dbReference type="NCBIfam" id="TIGR02787">
    <property type="entry name" value="codY_Gpos"/>
    <property type="match status" value="1"/>
</dbReference>
<dbReference type="NCBIfam" id="NF003170">
    <property type="entry name" value="PRK04158.1"/>
    <property type="match status" value="1"/>
</dbReference>
<dbReference type="PANTHER" id="PTHR40062:SF1">
    <property type="entry name" value="GLOBAL TRANSCRIPTIONAL REGULATOR CODY"/>
    <property type="match status" value="1"/>
</dbReference>
<dbReference type="PANTHER" id="PTHR40062">
    <property type="entry name" value="GTP-SENSING TRANSCRIPTIONAL PLEIOTROPIC REPRESSOR CODY"/>
    <property type="match status" value="1"/>
</dbReference>
<dbReference type="Pfam" id="PF06018">
    <property type="entry name" value="CodY"/>
    <property type="match status" value="1"/>
</dbReference>
<dbReference type="Pfam" id="PF08222">
    <property type="entry name" value="HTH_CodY"/>
    <property type="match status" value="1"/>
</dbReference>
<dbReference type="PIRSF" id="PIRSF011572">
    <property type="entry name" value="GTP_sensing_CodY"/>
    <property type="match status" value="1"/>
</dbReference>
<dbReference type="SUPFAM" id="SSF55781">
    <property type="entry name" value="GAF domain-like"/>
    <property type="match status" value="1"/>
</dbReference>
<dbReference type="SUPFAM" id="SSF46785">
    <property type="entry name" value="Winged helix' DNA-binding domain"/>
    <property type="match status" value="1"/>
</dbReference>
<protein>
    <recommendedName>
        <fullName evidence="1">Global transcriptional regulator CodY</fullName>
    </recommendedName>
</protein>
<evidence type="ECO:0000255" key="1">
    <source>
        <dbReference type="HAMAP-Rule" id="MF_00621"/>
    </source>
</evidence>
<proteinExistence type="inferred from homology"/>
<sequence length="258" mass="28974">MSILLNKTRKLNTILQKSGTEPVIFDDICNILSEVLECNVYVVSRKGKILGNNFSSGFECEKLKKEIIPTKKFPDSYNLKLLDCKETKANLKHTEFCTFYENEKCEFENKVSTIVPIIGNRERLGTLVLARFTKKFTDDDLVLAEYSATIVGLEILRSKNDEIEAEARKRAVVQLAIGTLSYSELEAVEHIFNELDGNEGLLVASKIADKVGITRSVIVNALRKFESAGVIESRSLGMKGTHIKILNDRLLEGLKKIK</sequence>
<reference key="1">
    <citation type="journal article" date="2001" name="J. Bacteriol.">
        <title>Genome sequence and comparative analysis of the solvent-producing bacterium Clostridium acetobutylicum.</title>
        <authorList>
            <person name="Noelling J."/>
            <person name="Breton G."/>
            <person name="Omelchenko M.V."/>
            <person name="Makarova K.S."/>
            <person name="Zeng Q."/>
            <person name="Gibson R."/>
            <person name="Lee H.M."/>
            <person name="Dubois J."/>
            <person name="Qiu D."/>
            <person name="Hitti J."/>
            <person name="Wolf Y.I."/>
            <person name="Tatusov R.L."/>
            <person name="Sabathe F."/>
            <person name="Doucette-Stamm L.A."/>
            <person name="Soucaille P."/>
            <person name="Daly M.J."/>
            <person name="Bennett G.N."/>
            <person name="Koonin E.V."/>
            <person name="Smith D.R."/>
        </authorList>
    </citation>
    <scope>NUCLEOTIDE SEQUENCE [LARGE SCALE GENOMIC DNA]</scope>
    <source>
        <strain>ATCC 824 / DSM 792 / JCM 1419 / IAM 19013 / LMG 5710 / NBRC 13948 / NRRL B-527 / VKM B-1787 / 2291 / W</strain>
    </source>
</reference>